<gene>
    <name type="primary">pdhC</name>
    <name type="ordered locus">RT0517</name>
</gene>
<accession>Q68WK6</accession>
<reference key="1">
    <citation type="journal article" date="2004" name="J. Bacteriol.">
        <title>Complete genome sequence of Rickettsia typhi and comparison with sequences of other Rickettsiae.</title>
        <authorList>
            <person name="McLeod M.P."/>
            <person name="Qin X."/>
            <person name="Karpathy S.E."/>
            <person name="Gioia J."/>
            <person name="Highlander S.K."/>
            <person name="Fox G.E."/>
            <person name="McNeill T.Z."/>
            <person name="Jiang H."/>
            <person name="Muzny D."/>
            <person name="Jacob L.S."/>
            <person name="Hawes A.C."/>
            <person name="Sodergren E."/>
            <person name="Gill R."/>
            <person name="Hume J."/>
            <person name="Morgan M."/>
            <person name="Fan G."/>
            <person name="Amin A.G."/>
            <person name="Gibbs R.A."/>
            <person name="Hong C."/>
            <person name="Yu X.-J."/>
            <person name="Walker D.H."/>
            <person name="Weinstock G.M."/>
        </authorList>
    </citation>
    <scope>NUCLEOTIDE SEQUENCE [LARGE SCALE GENOMIC DNA]</scope>
    <source>
        <strain>ATCC VR-144 / Wilmington</strain>
    </source>
</reference>
<name>ODP2_RICTY</name>
<keyword id="KW-0012">Acyltransferase</keyword>
<keyword id="KW-0450">Lipoyl</keyword>
<keyword id="KW-0808">Transferase</keyword>
<proteinExistence type="inferred from homology"/>
<dbReference type="EC" id="2.3.1.12"/>
<dbReference type="EMBL" id="AE017197">
    <property type="protein sequence ID" value="AAU03986.1"/>
    <property type="molecule type" value="Genomic_DNA"/>
</dbReference>
<dbReference type="RefSeq" id="WP_011190967.1">
    <property type="nucleotide sequence ID" value="NC_006142.1"/>
</dbReference>
<dbReference type="SMR" id="Q68WK6"/>
<dbReference type="KEGG" id="rty:RT0517"/>
<dbReference type="eggNOG" id="COG0508">
    <property type="taxonomic scope" value="Bacteria"/>
</dbReference>
<dbReference type="HOGENOM" id="CLU_016733_10_2_5"/>
<dbReference type="OrthoDB" id="9805770at2"/>
<dbReference type="Proteomes" id="UP000000604">
    <property type="component" value="Chromosome"/>
</dbReference>
<dbReference type="GO" id="GO:0045254">
    <property type="term" value="C:pyruvate dehydrogenase complex"/>
    <property type="evidence" value="ECO:0007669"/>
    <property type="project" value="InterPro"/>
</dbReference>
<dbReference type="GO" id="GO:0004742">
    <property type="term" value="F:dihydrolipoyllysine-residue acetyltransferase activity"/>
    <property type="evidence" value="ECO:0007669"/>
    <property type="project" value="UniProtKB-EC"/>
</dbReference>
<dbReference type="GO" id="GO:0006086">
    <property type="term" value="P:pyruvate decarboxylation to acetyl-CoA"/>
    <property type="evidence" value="ECO:0007669"/>
    <property type="project" value="InterPro"/>
</dbReference>
<dbReference type="CDD" id="cd06849">
    <property type="entry name" value="lipoyl_domain"/>
    <property type="match status" value="1"/>
</dbReference>
<dbReference type="FunFam" id="2.40.50.100:FF:000010">
    <property type="entry name" value="Acetyltransferase component of pyruvate dehydrogenase complex"/>
    <property type="match status" value="1"/>
</dbReference>
<dbReference type="FunFam" id="3.30.559.10:FF:000003">
    <property type="entry name" value="Acetyltransferase component of pyruvate dehydrogenase complex"/>
    <property type="match status" value="1"/>
</dbReference>
<dbReference type="Gene3D" id="2.40.50.100">
    <property type="match status" value="1"/>
</dbReference>
<dbReference type="Gene3D" id="3.30.559.10">
    <property type="entry name" value="Chloramphenicol acetyltransferase-like domain"/>
    <property type="match status" value="1"/>
</dbReference>
<dbReference type="Gene3D" id="4.10.320.10">
    <property type="entry name" value="E3-binding domain"/>
    <property type="match status" value="1"/>
</dbReference>
<dbReference type="InterPro" id="IPR003016">
    <property type="entry name" value="2-oxoA_DH_lipoyl-BS"/>
</dbReference>
<dbReference type="InterPro" id="IPR001078">
    <property type="entry name" value="2-oxoacid_DH_actylTfrase"/>
</dbReference>
<dbReference type="InterPro" id="IPR000089">
    <property type="entry name" value="Biotin_lipoyl"/>
</dbReference>
<dbReference type="InterPro" id="IPR023213">
    <property type="entry name" value="CAT-like_dom_sf"/>
</dbReference>
<dbReference type="InterPro" id="IPR045257">
    <property type="entry name" value="E2/Pdx1"/>
</dbReference>
<dbReference type="InterPro" id="IPR036625">
    <property type="entry name" value="E3-bd_dom_sf"/>
</dbReference>
<dbReference type="InterPro" id="IPR006257">
    <property type="entry name" value="LAT1"/>
</dbReference>
<dbReference type="InterPro" id="IPR004167">
    <property type="entry name" value="PSBD"/>
</dbReference>
<dbReference type="InterPro" id="IPR011053">
    <property type="entry name" value="Single_hybrid_motif"/>
</dbReference>
<dbReference type="NCBIfam" id="TIGR01349">
    <property type="entry name" value="PDHac_trf_mito"/>
    <property type="match status" value="1"/>
</dbReference>
<dbReference type="PANTHER" id="PTHR23151">
    <property type="entry name" value="DIHYDROLIPOAMIDE ACETYL/SUCCINYL-TRANSFERASE-RELATED"/>
    <property type="match status" value="1"/>
</dbReference>
<dbReference type="PANTHER" id="PTHR23151:SF90">
    <property type="entry name" value="DIHYDROLIPOYLLYSINE-RESIDUE ACETYLTRANSFERASE COMPONENT OF PYRUVATE DEHYDROGENASE COMPLEX, MITOCHONDRIAL-RELATED"/>
    <property type="match status" value="1"/>
</dbReference>
<dbReference type="Pfam" id="PF00198">
    <property type="entry name" value="2-oxoacid_dh"/>
    <property type="match status" value="1"/>
</dbReference>
<dbReference type="Pfam" id="PF00364">
    <property type="entry name" value="Biotin_lipoyl"/>
    <property type="match status" value="1"/>
</dbReference>
<dbReference type="Pfam" id="PF02817">
    <property type="entry name" value="E3_binding"/>
    <property type="match status" value="1"/>
</dbReference>
<dbReference type="SUPFAM" id="SSF52777">
    <property type="entry name" value="CoA-dependent acyltransferases"/>
    <property type="match status" value="1"/>
</dbReference>
<dbReference type="SUPFAM" id="SSF47005">
    <property type="entry name" value="Peripheral subunit-binding domain of 2-oxo acid dehydrogenase complex"/>
    <property type="match status" value="1"/>
</dbReference>
<dbReference type="SUPFAM" id="SSF51230">
    <property type="entry name" value="Single hybrid motif"/>
    <property type="match status" value="1"/>
</dbReference>
<dbReference type="PROSITE" id="PS50968">
    <property type="entry name" value="BIOTINYL_LIPOYL"/>
    <property type="match status" value="1"/>
</dbReference>
<dbReference type="PROSITE" id="PS00189">
    <property type="entry name" value="LIPOYL"/>
    <property type="match status" value="1"/>
</dbReference>
<dbReference type="PROSITE" id="PS51826">
    <property type="entry name" value="PSBD"/>
    <property type="match status" value="1"/>
</dbReference>
<comment type="function">
    <text evidence="1">The pyruvate dehydrogenase complex catalyzes the overall conversion of pyruvate to acetyl-CoA and CO(2). It contains multiple copies of three enzymatic components: pyruvate dehydrogenase (E1), dihydrolipoamide acetyltransferase (E2) and lipoamide dehydrogenase (E3) (By similarity).</text>
</comment>
<comment type="catalytic activity">
    <reaction>
        <text>N(6)-[(R)-dihydrolipoyl]-L-lysyl-[protein] + acetyl-CoA = N(6)-[(R)-S(8)-acetyldihydrolipoyl]-L-lysyl-[protein] + CoA</text>
        <dbReference type="Rhea" id="RHEA:17017"/>
        <dbReference type="Rhea" id="RHEA-COMP:10475"/>
        <dbReference type="Rhea" id="RHEA-COMP:10478"/>
        <dbReference type="ChEBI" id="CHEBI:57287"/>
        <dbReference type="ChEBI" id="CHEBI:57288"/>
        <dbReference type="ChEBI" id="CHEBI:83100"/>
        <dbReference type="ChEBI" id="CHEBI:83111"/>
        <dbReference type="EC" id="2.3.1.12"/>
    </reaction>
</comment>
<comment type="cofactor">
    <cofactor evidence="1">
        <name>(R)-lipoate</name>
        <dbReference type="ChEBI" id="CHEBI:83088"/>
    </cofactor>
    <text evidence="1">Binds 1 lipoyl cofactor covalently.</text>
</comment>
<comment type="subunit">
    <text evidence="1">Forms a 24-polypeptide structural core with octahedral symmetry.</text>
</comment>
<comment type="similarity">
    <text evidence="5">Belongs to the 2-oxoacid dehydrogenase family.</text>
</comment>
<protein>
    <recommendedName>
        <fullName>Dihydrolipoyllysine-residue acetyltransferase component of pyruvate dehydrogenase complex</fullName>
        <ecNumber>2.3.1.12</ecNumber>
    </recommendedName>
    <alternativeName>
        <fullName>Dihydrolipoamide acetyltransferase component of pyruvate dehydrogenase complex</fullName>
    </alternativeName>
    <alternativeName>
        <fullName>E2</fullName>
    </alternativeName>
</protein>
<evidence type="ECO:0000250" key="1"/>
<evidence type="ECO:0000255" key="2"/>
<evidence type="ECO:0000255" key="3">
    <source>
        <dbReference type="PROSITE-ProRule" id="PRU01066"/>
    </source>
</evidence>
<evidence type="ECO:0000255" key="4">
    <source>
        <dbReference type="PROSITE-ProRule" id="PRU01170"/>
    </source>
</evidence>
<evidence type="ECO:0000305" key="5"/>
<feature type="chain" id="PRO_0000288765" description="Dihydrolipoyllysine-residue acetyltransferase component of pyruvate dehydrogenase complex">
    <location>
        <begin position="1"/>
        <end position="404"/>
    </location>
</feature>
<feature type="domain" description="Lipoyl-binding" evidence="3">
    <location>
        <begin position="2"/>
        <end position="78"/>
    </location>
</feature>
<feature type="domain" description="Peripheral subunit-binding (PSBD)" evidence="4">
    <location>
        <begin position="128"/>
        <end position="165"/>
    </location>
</feature>
<feature type="active site" evidence="2">
    <location>
        <position position="377"/>
    </location>
</feature>
<feature type="modified residue" description="N6-lipoyllysine" evidence="1 3">
    <location>
        <position position="43"/>
    </location>
</feature>
<organism>
    <name type="scientific">Rickettsia typhi (strain ATCC VR-144 / Wilmington)</name>
    <dbReference type="NCBI Taxonomy" id="257363"/>
    <lineage>
        <taxon>Bacteria</taxon>
        <taxon>Pseudomonadati</taxon>
        <taxon>Pseudomonadota</taxon>
        <taxon>Alphaproteobacteria</taxon>
        <taxon>Rickettsiales</taxon>
        <taxon>Rickettsiaceae</taxon>
        <taxon>Rickettsieae</taxon>
        <taxon>Rickettsia</taxon>
        <taxon>typhus group</taxon>
    </lineage>
</organism>
<sequence>MPIKILMPALSPTMKDGNLARWLKKEGDKVNPGEVIAEIETDKATMEVESVDEGILAKIIIPQNSQNVPVNSLIAVLSEEGESTADIDAFIAKNNSVSLSLKTDTTLKKANESITNVEVVKHDLSKIFASPLAKRLAKIRNIRLESVQGSGPHGRIVKQDILSYSPSTAYNRDTEEYRSVPNNNIRQIIAKRLLESKQTVPHFYLSIECNVDKLLDIREDINKSFSEDKLTKISVNDFIILAVAKALQEVPNANASWAEDAIRYYNNVDISVAVAIENGIVTPIIKDANKKNIIELSHEMKILIKKAKDNKLTPVEFQGGGFTISNLGMYGIKNFNAIINTPQSCIMGVGASTKRAIVKNDQIIIATIMDVTLSADHRVIDGAVSAEFLASFKRFIEHPVLMLI</sequence>